<feature type="chain" id="PRO_0000118881" description="Transcription initiation factor TFIID subunit 7">
    <location>
        <begin position="1"/>
        <end position="349"/>
    </location>
</feature>
<feature type="region of interest" description="Disordered" evidence="4">
    <location>
        <begin position="105"/>
        <end position="126"/>
    </location>
</feature>
<feature type="region of interest" description="Disordered" evidence="4">
    <location>
        <begin position="186"/>
        <end position="212"/>
    </location>
</feature>
<feature type="region of interest" description="Disordered" evidence="4">
    <location>
        <begin position="227"/>
        <end position="247"/>
    </location>
</feature>
<feature type="region of interest" description="Disordered" evidence="4">
    <location>
        <begin position="328"/>
        <end position="349"/>
    </location>
</feature>
<feature type="coiled-coil region" evidence="3">
    <location>
        <begin position="244"/>
        <end position="349"/>
    </location>
</feature>
<feature type="short sequence motif" description="[KR]-[STA]-K motif">
    <location>
        <begin position="3"/>
        <end position="5"/>
    </location>
</feature>
<feature type="compositionally biased region" description="Acidic residues" evidence="4">
    <location>
        <begin position="230"/>
        <end position="247"/>
    </location>
</feature>
<feature type="modified residue" description="Phosphoserine" evidence="32 36 37">
    <location>
        <position position="171"/>
    </location>
</feature>
<feature type="modified residue" description="Phosphoserine" evidence="36">
    <location>
        <position position="200"/>
    </location>
</feature>
<feature type="modified residue" description="Phosphoserine" evidence="36">
    <location>
        <position position="201"/>
    </location>
</feature>
<feature type="modified residue" description="Phosphoserine" evidence="31 36">
    <location>
        <position position="213"/>
    </location>
</feature>
<feature type="modified residue" description="Phosphoserine" evidence="10 32 33 34 35 36 37">
    <location>
        <position position="264"/>
    </location>
</feature>
<feature type="sequence variant" id="VAR_005629">
    <original>S</original>
    <variation>R</variation>
    <location>
        <position position="178"/>
    </location>
</feature>
<feature type="mutagenesis site" description="Abolishes methylation in vitro." evidence="8">
    <original>K</original>
    <variation>R</variation>
    <location>
        <position position="5"/>
    </location>
</feature>
<feature type="mutagenesis site" description="Reduced H3 acetylation and transcription at target promoters." evidence="10">
    <original>S</original>
    <variation>A</variation>
    <location>
        <position position="264"/>
    </location>
</feature>
<feature type="mutagenesis site" description="50% reduction in TAF1-binding, reduced incorporation of TAF7 into TFIID complexes." evidence="10">
    <original>S</original>
    <variation>D</variation>
    <location>
        <position position="264"/>
    </location>
</feature>
<feature type="sequence conflict" description="In Ref. 2; AAB60347." evidence="20" ref="2">
    <original>K</original>
    <variation>N</variation>
    <location>
        <position position="283"/>
    </location>
</feature>
<feature type="strand" evidence="38">
    <location>
        <begin position="14"/>
        <end position="19"/>
    </location>
</feature>
<feature type="helix" evidence="38">
    <location>
        <begin position="22"/>
        <end position="34"/>
    </location>
</feature>
<feature type="helix" evidence="38">
    <location>
        <begin position="39"/>
        <end position="42"/>
    </location>
</feature>
<feature type="strand" evidence="38">
    <location>
        <begin position="43"/>
        <end position="47"/>
    </location>
</feature>
<feature type="strand" evidence="38">
    <location>
        <begin position="51"/>
        <end position="58"/>
    </location>
</feature>
<feature type="strand" evidence="38">
    <location>
        <begin position="61"/>
        <end position="101"/>
    </location>
</feature>
<feature type="helix" evidence="38">
    <location>
        <begin position="138"/>
        <end position="140"/>
    </location>
</feature>
<feature type="helix" evidence="38">
    <location>
        <begin position="143"/>
        <end position="146"/>
    </location>
</feature>
<feature type="helix" evidence="39">
    <location>
        <begin position="162"/>
        <end position="175"/>
    </location>
</feature>
<feature type="strand" evidence="39">
    <location>
        <begin position="179"/>
        <end position="183"/>
    </location>
</feature>
<organism>
    <name type="scientific">Homo sapiens</name>
    <name type="common">Human</name>
    <dbReference type="NCBI Taxonomy" id="9606"/>
    <lineage>
        <taxon>Eukaryota</taxon>
        <taxon>Metazoa</taxon>
        <taxon>Chordata</taxon>
        <taxon>Craniata</taxon>
        <taxon>Vertebrata</taxon>
        <taxon>Euteleostomi</taxon>
        <taxon>Mammalia</taxon>
        <taxon>Eutheria</taxon>
        <taxon>Euarchontoglires</taxon>
        <taxon>Primates</taxon>
        <taxon>Haplorrhini</taxon>
        <taxon>Catarrhini</taxon>
        <taxon>Hominidae</taxon>
        <taxon>Homo</taxon>
    </lineage>
</organism>
<protein>
    <recommendedName>
        <fullName>Transcription initiation factor TFIID subunit 7</fullName>
    </recommendedName>
    <alternativeName>
        <fullName>RNA polymerase II TBP-associated factor subunit F</fullName>
    </alternativeName>
    <alternativeName>
        <fullName>Transcription initiation factor TFIID 55 kDa subunit</fullName>
        <shortName>TAF(II)55</shortName>
        <shortName>TAFII-55</shortName>
        <shortName evidence="17 18 19">TAFII55</shortName>
    </alternativeName>
</protein>
<proteinExistence type="evidence at protein level"/>
<dbReference type="EMBL" id="X97999">
    <property type="protein sequence ID" value="CAA66636.1"/>
    <property type="molecule type" value="mRNA"/>
</dbReference>
<dbReference type="EMBL" id="U18062">
    <property type="protein sequence ID" value="AAB60347.1"/>
    <property type="molecule type" value="mRNA"/>
</dbReference>
<dbReference type="EMBL" id="AF349038">
    <property type="protein sequence ID" value="AAK30585.1"/>
    <property type="molecule type" value="Genomic_DNA"/>
</dbReference>
<dbReference type="EMBL" id="AK314837">
    <property type="protein sequence ID" value="BAG37356.1"/>
    <property type="molecule type" value="mRNA"/>
</dbReference>
<dbReference type="EMBL" id="CH471062">
    <property type="protein sequence ID" value="EAW61966.1"/>
    <property type="molecule type" value="Genomic_DNA"/>
</dbReference>
<dbReference type="EMBL" id="BC032737">
    <property type="protein sequence ID" value="AAH32737.1"/>
    <property type="molecule type" value="mRNA"/>
</dbReference>
<dbReference type="CCDS" id="CCDS4259.1"/>
<dbReference type="PIR" id="I38904">
    <property type="entry name" value="I38904"/>
</dbReference>
<dbReference type="RefSeq" id="NP_005633.2">
    <property type="nucleotide sequence ID" value="NM_005642.2"/>
</dbReference>
<dbReference type="PDB" id="4RGW">
    <property type="method" value="X-ray"/>
    <property type="resolution" value="2.30 A"/>
    <property type="chains" value="B=1-349"/>
</dbReference>
<dbReference type="PDB" id="5FUR">
    <property type="method" value="EM"/>
    <property type="resolution" value="8.50 A"/>
    <property type="chains" value="H=1-349"/>
</dbReference>
<dbReference type="PDB" id="6MZL">
    <property type="method" value="EM"/>
    <property type="resolution" value="23.00 A"/>
    <property type="chains" value="J=1-349"/>
</dbReference>
<dbReference type="PDB" id="6MZM">
    <property type="method" value="EM"/>
    <property type="resolution" value="7.50 A"/>
    <property type="chains" value="J=1-349"/>
</dbReference>
<dbReference type="PDB" id="7EDX">
    <property type="method" value="EM"/>
    <property type="resolution" value="4.50 A"/>
    <property type="chains" value="G=1-349"/>
</dbReference>
<dbReference type="PDB" id="7EG7">
    <property type="method" value="EM"/>
    <property type="resolution" value="6.20 A"/>
    <property type="chains" value="G=1-349"/>
</dbReference>
<dbReference type="PDB" id="7EG8">
    <property type="method" value="EM"/>
    <property type="resolution" value="7.40 A"/>
    <property type="chains" value="G=1-349"/>
</dbReference>
<dbReference type="PDB" id="7EG9">
    <property type="method" value="EM"/>
    <property type="resolution" value="3.70 A"/>
    <property type="chains" value="G=1-349"/>
</dbReference>
<dbReference type="PDB" id="7EGA">
    <property type="method" value="EM"/>
    <property type="resolution" value="4.10 A"/>
    <property type="chains" value="G=1-349"/>
</dbReference>
<dbReference type="PDB" id="7EGB">
    <property type="method" value="EM"/>
    <property type="resolution" value="3.30 A"/>
    <property type="chains" value="G=1-349"/>
</dbReference>
<dbReference type="PDB" id="7EGC">
    <property type="method" value="EM"/>
    <property type="resolution" value="3.90 A"/>
    <property type="chains" value="G=1-349"/>
</dbReference>
<dbReference type="PDB" id="7EGD">
    <property type="method" value="EM"/>
    <property type="resolution" value="6.75 A"/>
    <property type="chains" value="G=1-349"/>
</dbReference>
<dbReference type="PDB" id="7EGE">
    <property type="method" value="EM"/>
    <property type="resolution" value="9.00 A"/>
    <property type="chains" value="G=1-349"/>
</dbReference>
<dbReference type="PDB" id="7EGH">
    <property type="method" value="EM"/>
    <property type="resolution" value="3.04 A"/>
    <property type="chains" value="G=1-349"/>
</dbReference>
<dbReference type="PDB" id="7EGI">
    <property type="method" value="EM"/>
    <property type="resolution" value="9.82 A"/>
    <property type="chains" value="G=1-349"/>
</dbReference>
<dbReference type="PDB" id="7EGJ">
    <property type="method" value="EM"/>
    <property type="resolution" value="8.64 A"/>
    <property type="chains" value="G=1-349"/>
</dbReference>
<dbReference type="PDB" id="7ENA">
    <property type="method" value="EM"/>
    <property type="resolution" value="4.07 A"/>
    <property type="chains" value="DG=1-349"/>
</dbReference>
<dbReference type="PDB" id="7ENC">
    <property type="method" value="EM"/>
    <property type="resolution" value="4.13 A"/>
    <property type="chains" value="DG=1-349"/>
</dbReference>
<dbReference type="PDB" id="8GXQ">
    <property type="method" value="EM"/>
    <property type="resolution" value="5.04 A"/>
    <property type="chains" value="DG=1-349"/>
</dbReference>
<dbReference type="PDB" id="8GXS">
    <property type="method" value="EM"/>
    <property type="resolution" value="4.16 A"/>
    <property type="chains" value="DG=1-349"/>
</dbReference>
<dbReference type="PDB" id="8WAK">
    <property type="method" value="EM"/>
    <property type="resolution" value="5.47 A"/>
    <property type="chains" value="G=1-349"/>
</dbReference>
<dbReference type="PDB" id="8WAL">
    <property type="method" value="EM"/>
    <property type="resolution" value="8.52 A"/>
    <property type="chains" value="G=1-349"/>
</dbReference>
<dbReference type="PDB" id="8WAN">
    <property type="method" value="EM"/>
    <property type="resolution" value="6.07 A"/>
    <property type="chains" value="G=1-349"/>
</dbReference>
<dbReference type="PDB" id="8WAO">
    <property type="method" value="EM"/>
    <property type="resolution" value="6.40 A"/>
    <property type="chains" value="G=1-349"/>
</dbReference>
<dbReference type="PDB" id="8WAP">
    <property type="method" value="EM"/>
    <property type="resolution" value="5.85 A"/>
    <property type="chains" value="G=1-349"/>
</dbReference>
<dbReference type="PDB" id="8WAQ">
    <property type="method" value="EM"/>
    <property type="resolution" value="6.29 A"/>
    <property type="chains" value="G=1-349"/>
</dbReference>
<dbReference type="PDB" id="8WAR">
    <property type="method" value="EM"/>
    <property type="resolution" value="7.20 A"/>
    <property type="chains" value="G=1-349"/>
</dbReference>
<dbReference type="PDB" id="8WAS">
    <property type="method" value="EM"/>
    <property type="resolution" value="6.13 A"/>
    <property type="chains" value="G=1-349"/>
</dbReference>
<dbReference type="PDBsum" id="4RGW"/>
<dbReference type="PDBsum" id="5FUR"/>
<dbReference type="PDBsum" id="6MZL"/>
<dbReference type="PDBsum" id="6MZM"/>
<dbReference type="PDBsum" id="7EDX"/>
<dbReference type="PDBsum" id="7EG7"/>
<dbReference type="PDBsum" id="7EG8"/>
<dbReference type="PDBsum" id="7EG9"/>
<dbReference type="PDBsum" id="7EGA"/>
<dbReference type="PDBsum" id="7EGB"/>
<dbReference type="PDBsum" id="7EGC"/>
<dbReference type="PDBsum" id="7EGD"/>
<dbReference type="PDBsum" id="7EGE"/>
<dbReference type="PDBsum" id="7EGH"/>
<dbReference type="PDBsum" id="7EGI"/>
<dbReference type="PDBsum" id="7EGJ"/>
<dbReference type="PDBsum" id="7ENA"/>
<dbReference type="PDBsum" id="7ENC"/>
<dbReference type="PDBsum" id="8GXQ"/>
<dbReference type="PDBsum" id="8GXS"/>
<dbReference type="PDBsum" id="8WAK"/>
<dbReference type="PDBsum" id="8WAL"/>
<dbReference type="PDBsum" id="8WAN"/>
<dbReference type="PDBsum" id="8WAO"/>
<dbReference type="PDBsum" id="8WAP"/>
<dbReference type="PDBsum" id="8WAQ"/>
<dbReference type="PDBsum" id="8WAR"/>
<dbReference type="PDBsum" id="8WAS"/>
<dbReference type="EMDB" id="EMD-31075"/>
<dbReference type="EMDB" id="EMD-31107"/>
<dbReference type="EMDB" id="EMD-31108"/>
<dbReference type="EMDB" id="EMD-31109"/>
<dbReference type="EMDB" id="EMD-31110"/>
<dbReference type="EMDB" id="EMD-31111"/>
<dbReference type="EMDB" id="EMD-31112"/>
<dbReference type="EMDB" id="EMD-31113"/>
<dbReference type="EMDB" id="EMD-31114"/>
<dbReference type="EMDB" id="EMD-31117"/>
<dbReference type="EMDB" id="EMD-31118"/>
<dbReference type="EMDB" id="EMD-31119"/>
<dbReference type="EMDB" id="EMD-31204"/>
<dbReference type="EMDB" id="EMD-31207"/>
<dbReference type="EMDB" id="EMD-34359"/>
<dbReference type="EMDB" id="EMD-34360"/>
<dbReference type="EMDB" id="EMD-37395"/>
<dbReference type="EMDB" id="EMD-37396"/>
<dbReference type="EMDB" id="EMD-37398"/>
<dbReference type="EMDB" id="EMD-37399"/>
<dbReference type="EMDB" id="EMD-37400"/>
<dbReference type="EMDB" id="EMD-37401"/>
<dbReference type="EMDB" id="EMD-37402"/>
<dbReference type="EMDB" id="EMD-37403"/>
<dbReference type="EMDB" id="EMD-9305"/>
<dbReference type="EMDB" id="EMD-9306"/>
<dbReference type="SMR" id="Q15545"/>
<dbReference type="BioGRID" id="112742">
    <property type="interactions" value="112"/>
</dbReference>
<dbReference type="ComplexPortal" id="CPX-903">
    <property type="entry name" value="TFTC histone acetylation complex"/>
</dbReference>
<dbReference type="ComplexPortal" id="CPX-915">
    <property type="entry name" value="General transcription factor complex TFIID"/>
</dbReference>
<dbReference type="ComplexPortal" id="CPX-930">
    <property type="entry name" value="General transcription factor complex TFIID, TAF4B variant"/>
</dbReference>
<dbReference type="CORUM" id="Q15545"/>
<dbReference type="DIP" id="DIP-29047N"/>
<dbReference type="FunCoup" id="Q15545">
    <property type="interactions" value="2082"/>
</dbReference>
<dbReference type="IntAct" id="Q15545">
    <property type="interactions" value="47"/>
</dbReference>
<dbReference type="MINT" id="Q15545"/>
<dbReference type="STRING" id="9606.ENSP00000312709"/>
<dbReference type="GlyGen" id="Q15545">
    <property type="glycosylation" value="2 sites, 1 O-linked glycan (2 sites)"/>
</dbReference>
<dbReference type="iPTMnet" id="Q15545"/>
<dbReference type="PhosphoSitePlus" id="Q15545"/>
<dbReference type="BioMuta" id="TAF7"/>
<dbReference type="DMDM" id="3024690"/>
<dbReference type="jPOST" id="Q15545"/>
<dbReference type="MassIVE" id="Q15545"/>
<dbReference type="PaxDb" id="9606-ENSP00000312709"/>
<dbReference type="PeptideAtlas" id="Q15545"/>
<dbReference type="ProteomicsDB" id="60627"/>
<dbReference type="Pumba" id="Q15545"/>
<dbReference type="Antibodypedia" id="1826">
    <property type="antibodies" value="182 antibodies from 26 providers"/>
</dbReference>
<dbReference type="DNASU" id="6879"/>
<dbReference type="Ensembl" id="ENST00000313368.8">
    <property type="protein sequence ID" value="ENSP00000312709.5"/>
    <property type="gene ID" value="ENSG00000178913.9"/>
</dbReference>
<dbReference type="Ensembl" id="ENST00000624761.2">
    <property type="protein sequence ID" value="ENSP00000485510.2"/>
    <property type="gene ID" value="ENSG00000178913.9"/>
</dbReference>
<dbReference type="GeneID" id="6879"/>
<dbReference type="KEGG" id="hsa:6879"/>
<dbReference type="MANE-Select" id="ENST00000313368.8">
    <property type="protein sequence ID" value="ENSP00000312709.5"/>
    <property type="RefSeq nucleotide sequence ID" value="NM_005642.3"/>
    <property type="RefSeq protein sequence ID" value="NP_005633.2"/>
</dbReference>
<dbReference type="UCSC" id="uc003ljg.4">
    <property type="organism name" value="human"/>
</dbReference>
<dbReference type="AGR" id="HGNC:11541"/>
<dbReference type="CTD" id="6879"/>
<dbReference type="DisGeNET" id="6879"/>
<dbReference type="GeneCards" id="TAF7"/>
<dbReference type="HGNC" id="HGNC:11541">
    <property type="gene designation" value="TAF7"/>
</dbReference>
<dbReference type="HPA" id="ENSG00000178913">
    <property type="expression patterns" value="Low tissue specificity"/>
</dbReference>
<dbReference type="MIM" id="600573">
    <property type="type" value="gene"/>
</dbReference>
<dbReference type="neXtProt" id="NX_Q15545"/>
<dbReference type="OpenTargets" id="ENSG00000178913"/>
<dbReference type="PharmGKB" id="PA36316"/>
<dbReference type="VEuPathDB" id="HostDB:ENSG00000178913"/>
<dbReference type="eggNOG" id="KOG4011">
    <property type="taxonomic scope" value="Eukaryota"/>
</dbReference>
<dbReference type="GeneTree" id="ENSGT00940000160861"/>
<dbReference type="HOGENOM" id="CLU_037860_0_1_1"/>
<dbReference type="InParanoid" id="Q15545"/>
<dbReference type="OMA" id="NESDEHH"/>
<dbReference type="OrthoDB" id="153872at2759"/>
<dbReference type="PAN-GO" id="Q15545">
    <property type="GO annotations" value="4 GO annotations based on evolutionary models"/>
</dbReference>
<dbReference type="PhylomeDB" id="Q15545"/>
<dbReference type="TreeFam" id="TF313044"/>
<dbReference type="PathwayCommons" id="Q15545"/>
<dbReference type="Reactome" id="R-HSA-167161">
    <property type="pathway name" value="HIV Transcription Initiation"/>
</dbReference>
<dbReference type="Reactome" id="R-HSA-167162">
    <property type="pathway name" value="RNA Polymerase II HIV Promoter Escape"/>
</dbReference>
<dbReference type="Reactome" id="R-HSA-167172">
    <property type="pathway name" value="Transcription of the HIV genome"/>
</dbReference>
<dbReference type="Reactome" id="R-HSA-674695">
    <property type="pathway name" value="RNA Polymerase II Pre-transcription Events"/>
</dbReference>
<dbReference type="Reactome" id="R-HSA-6804756">
    <property type="pathway name" value="Regulation of TP53 Activity through Phosphorylation"/>
</dbReference>
<dbReference type="Reactome" id="R-HSA-73776">
    <property type="pathway name" value="RNA Polymerase II Promoter Escape"/>
</dbReference>
<dbReference type="Reactome" id="R-HSA-73779">
    <property type="pathway name" value="RNA Polymerase II Transcription Pre-Initiation And Promoter Opening"/>
</dbReference>
<dbReference type="Reactome" id="R-HSA-75953">
    <property type="pathway name" value="RNA Polymerase II Transcription Initiation"/>
</dbReference>
<dbReference type="Reactome" id="R-HSA-76042">
    <property type="pathway name" value="RNA Polymerase II Transcription Initiation And Promoter Clearance"/>
</dbReference>
<dbReference type="SignaLink" id="Q15545"/>
<dbReference type="SIGNOR" id="Q15545"/>
<dbReference type="BioGRID-ORCS" id="6879">
    <property type="hits" value="615 hits in 1180 CRISPR screens"/>
</dbReference>
<dbReference type="ChiTaRS" id="TAF7">
    <property type="organism name" value="human"/>
</dbReference>
<dbReference type="EvolutionaryTrace" id="Q15545"/>
<dbReference type="GeneWiki" id="TAF7"/>
<dbReference type="GenomeRNAi" id="6879"/>
<dbReference type="Pharos" id="Q15545">
    <property type="development level" value="Tbio"/>
</dbReference>
<dbReference type="PRO" id="PR:Q15545"/>
<dbReference type="Proteomes" id="UP000005640">
    <property type="component" value="Chromosome 5"/>
</dbReference>
<dbReference type="RNAct" id="Q15545">
    <property type="molecule type" value="protein"/>
</dbReference>
<dbReference type="Bgee" id="ENSG00000178913">
    <property type="expression patterns" value="Expressed in calcaneal tendon and 211 other cell types or tissues"/>
</dbReference>
<dbReference type="ExpressionAtlas" id="Q15545">
    <property type="expression patterns" value="baseline and differential"/>
</dbReference>
<dbReference type="GO" id="GO:0005737">
    <property type="term" value="C:cytoplasm"/>
    <property type="evidence" value="ECO:0007669"/>
    <property type="project" value="Ensembl"/>
</dbReference>
<dbReference type="GO" id="GO:0001673">
    <property type="term" value="C:male germ cell nucleus"/>
    <property type="evidence" value="ECO:0007669"/>
    <property type="project" value="Ensembl"/>
</dbReference>
<dbReference type="GO" id="GO:0071339">
    <property type="term" value="C:MLL1 complex"/>
    <property type="evidence" value="ECO:0000314"/>
    <property type="project" value="UniProtKB"/>
</dbReference>
<dbReference type="GO" id="GO:0005654">
    <property type="term" value="C:nucleoplasm"/>
    <property type="evidence" value="ECO:0000304"/>
    <property type="project" value="Reactome"/>
</dbReference>
<dbReference type="GO" id="GO:0005634">
    <property type="term" value="C:nucleus"/>
    <property type="evidence" value="ECO:0000314"/>
    <property type="project" value="UniProt"/>
</dbReference>
<dbReference type="GO" id="GO:0005669">
    <property type="term" value="C:transcription factor TFIID complex"/>
    <property type="evidence" value="ECO:0000314"/>
    <property type="project" value="UniProtKB"/>
</dbReference>
<dbReference type="GO" id="GO:0033276">
    <property type="term" value="C:transcription factor TFTC complex"/>
    <property type="evidence" value="ECO:0000314"/>
    <property type="project" value="UniProtKB"/>
</dbReference>
<dbReference type="GO" id="GO:0005667">
    <property type="term" value="C:transcription regulator complex"/>
    <property type="evidence" value="ECO:0000353"/>
    <property type="project" value="ParkinsonsUK-UCL"/>
</dbReference>
<dbReference type="GO" id="GO:0140297">
    <property type="term" value="F:DNA-binding transcription factor binding"/>
    <property type="evidence" value="ECO:0000353"/>
    <property type="project" value="UniProtKB"/>
</dbReference>
<dbReference type="GO" id="GO:0035035">
    <property type="term" value="F:histone acetyltransferase binding"/>
    <property type="evidence" value="ECO:0000353"/>
    <property type="project" value="UniProtKB"/>
</dbReference>
<dbReference type="GO" id="GO:0046966">
    <property type="term" value="F:nuclear thyroid hormone receptor binding"/>
    <property type="evidence" value="ECO:0000353"/>
    <property type="project" value="UniProtKB"/>
</dbReference>
<dbReference type="GO" id="GO:0042809">
    <property type="term" value="F:nuclear vitamin D receptor binding"/>
    <property type="evidence" value="ECO:0000353"/>
    <property type="project" value="UniProtKB"/>
</dbReference>
<dbReference type="GO" id="GO:0106140">
    <property type="term" value="F:P-TEFb complex binding"/>
    <property type="evidence" value="ECO:0000314"/>
    <property type="project" value="UniProtKB"/>
</dbReference>
<dbReference type="GO" id="GO:0046982">
    <property type="term" value="F:protein heterodimerization activity"/>
    <property type="evidence" value="ECO:0000353"/>
    <property type="project" value="ParkinsonsUK-UCL"/>
</dbReference>
<dbReference type="GO" id="GO:0016251">
    <property type="term" value="F:RNA polymerase II general transcription initiation factor activity"/>
    <property type="evidence" value="ECO:0000314"/>
    <property type="project" value="ParkinsonsUK-UCL"/>
</dbReference>
<dbReference type="GO" id="GO:0001097">
    <property type="term" value="F:TFIIH-class transcription factor complex binding"/>
    <property type="evidence" value="ECO:0000314"/>
    <property type="project" value="UniProtKB"/>
</dbReference>
<dbReference type="GO" id="GO:0000976">
    <property type="term" value="F:transcription cis-regulatory region binding"/>
    <property type="evidence" value="ECO:0000314"/>
    <property type="project" value="UniProtKB"/>
</dbReference>
<dbReference type="GO" id="GO:0006325">
    <property type="term" value="P:chromatin organization"/>
    <property type="evidence" value="ECO:0007669"/>
    <property type="project" value="GOC"/>
</dbReference>
<dbReference type="GO" id="GO:0006352">
    <property type="term" value="P:DNA-templated transcription initiation"/>
    <property type="evidence" value="ECO:0000314"/>
    <property type="project" value="UniProtKB"/>
</dbReference>
<dbReference type="GO" id="GO:0030520">
    <property type="term" value="P:estrogen receptor signaling pathway"/>
    <property type="evidence" value="ECO:0007669"/>
    <property type="project" value="Ensembl"/>
</dbReference>
<dbReference type="GO" id="GO:0042789">
    <property type="term" value="P:mRNA transcription by RNA polymerase II"/>
    <property type="evidence" value="ECO:0000314"/>
    <property type="project" value="ComplexPortal"/>
</dbReference>
<dbReference type="GO" id="GO:0045892">
    <property type="term" value="P:negative regulation of DNA-templated transcription"/>
    <property type="evidence" value="ECO:0000314"/>
    <property type="project" value="UniProtKB"/>
</dbReference>
<dbReference type="GO" id="GO:0045344">
    <property type="term" value="P:negative regulation of MHC class I biosynthetic process"/>
    <property type="evidence" value="ECO:0000314"/>
    <property type="project" value="CACAO"/>
</dbReference>
<dbReference type="GO" id="GO:0045347">
    <property type="term" value="P:negative regulation of MHC class II biosynthetic process"/>
    <property type="evidence" value="ECO:0000315"/>
    <property type="project" value="CACAO"/>
</dbReference>
<dbReference type="GO" id="GO:0006469">
    <property type="term" value="P:negative regulation of protein kinase activity"/>
    <property type="evidence" value="ECO:0000314"/>
    <property type="project" value="UniProtKB"/>
</dbReference>
<dbReference type="GO" id="GO:0000122">
    <property type="term" value="P:negative regulation of transcription by RNA polymerase II"/>
    <property type="evidence" value="ECO:0000314"/>
    <property type="project" value="UniProtKB"/>
</dbReference>
<dbReference type="GO" id="GO:0045893">
    <property type="term" value="P:positive regulation of DNA-templated transcription"/>
    <property type="evidence" value="ECO:0000303"/>
    <property type="project" value="ComplexPortal"/>
</dbReference>
<dbReference type="GO" id="GO:0045944">
    <property type="term" value="P:positive regulation of transcription by RNA polymerase II"/>
    <property type="evidence" value="ECO:0000314"/>
    <property type="project" value="UniProtKB"/>
</dbReference>
<dbReference type="GO" id="GO:0060261">
    <property type="term" value="P:positive regulation of transcription initiation by RNA polymerase II"/>
    <property type="evidence" value="ECO:0000314"/>
    <property type="project" value="ComplexPortal"/>
</dbReference>
<dbReference type="GO" id="GO:0006282">
    <property type="term" value="P:regulation of DNA repair"/>
    <property type="evidence" value="ECO:0000303"/>
    <property type="project" value="ComplexPortal"/>
</dbReference>
<dbReference type="GO" id="GO:0006357">
    <property type="term" value="P:regulation of transcription by RNA polymerase II"/>
    <property type="evidence" value="ECO:0000314"/>
    <property type="project" value="ComplexPortal"/>
</dbReference>
<dbReference type="GO" id="GO:0051123">
    <property type="term" value="P:RNA polymerase II preinitiation complex assembly"/>
    <property type="evidence" value="ECO:0000353"/>
    <property type="project" value="ComplexPortal"/>
</dbReference>
<dbReference type="GO" id="GO:0000296">
    <property type="term" value="P:spermine transport"/>
    <property type="evidence" value="ECO:0000250"/>
    <property type="project" value="GO_Central"/>
</dbReference>
<dbReference type="GO" id="GO:0006366">
    <property type="term" value="P:transcription by RNA polymerase II"/>
    <property type="evidence" value="ECO:0000314"/>
    <property type="project" value="UniProtKB"/>
</dbReference>
<dbReference type="GO" id="GO:0006367">
    <property type="term" value="P:transcription initiation at RNA polymerase II promoter"/>
    <property type="evidence" value="ECO:0000314"/>
    <property type="project" value="UniProtKB"/>
</dbReference>
<dbReference type="CDD" id="cd08047">
    <property type="entry name" value="TAF7"/>
    <property type="match status" value="1"/>
</dbReference>
<dbReference type="InterPro" id="IPR037817">
    <property type="entry name" value="TAF7"/>
</dbReference>
<dbReference type="InterPro" id="IPR006751">
    <property type="entry name" value="TAFII55_prot_cons_reg"/>
</dbReference>
<dbReference type="PANTHER" id="PTHR12228">
    <property type="entry name" value="TRANSCRIPTION INITIATION FACTOR TFIID 55 KD SUBUNIT-RELATED"/>
    <property type="match status" value="1"/>
</dbReference>
<dbReference type="PANTHER" id="PTHR12228:SF6">
    <property type="entry name" value="TRANSCRIPTION INITIATION FACTOR TFIID SUBUNIT 7"/>
    <property type="match status" value="1"/>
</dbReference>
<dbReference type="Pfam" id="PF04658">
    <property type="entry name" value="TAFII55_N"/>
    <property type="match status" value="1"/>
</dbReference>
<dbReference type="SMART" id="SM01370">
    <property type="entry name" value="TAFII55_N"/>
    <property type="match status" value="1"/>
</dbReference>
<evidence type="ECO:0000250" key="1"/>
<evidence type="ECO:0000250" key="2">
    <source>
        <dbReference type="UniProtKB" id="Q9R1C0"/>
    </source>
</evidence>
<evidence type="ECO:0000255" key="3"/>
<evidence type="ECO:0000256" key="4">
    <source>
        <dbReference type="SAM" id="MobiDB-lite"/>
    </source>
</evidence>
<evidence type="ECO:0000269" key="5">
    <source>
    </source>
</evidence>
<evidence type="ECO:0000269" key="6">
    <source>
    </source>
</evidence>
<evidence type="ECO:0000269" key="7">
    <source>
    </source>
</evidence>
<evidence type="ECO:0000269" key="8">
    <source>
    </source>
</evidence>
<evidence type="ECO:0000269" key="9">
    <source>
    </source>
</evidence>
<evidence type="ECO:0000269" key="10">
    <source>
    </source>
</evidence>
<evidence type="ECO:0000269" key="11">
    <source>
    </source>
</evidence>
<evidence type="ECO:0000269" key="12">
    <source>
    </source>
</evidence>
<evidence type="ECO:0000269" key="13">
    <source>
    </source>
</evidence>
<evidence type="ECO:0000269" key="14">
    <source>
    </source>
</evidence>
<evidence type="ECO:0000269" key="15">
    <source>
    </source>
</evidence>
<evidence type="ECO:0000269" key="16">
    <source>
    </source>
</evidence>
<evidence type="ECO:0000303" key="17">
    <source>
    </source>
</evidence>
<evidence type="ECO:0000303" key="18">
    <source>
    </source>
</evidence>
<evidence type="ECO:0000303" key="19">
    <source>
    </source>
</evidence>
<evidence type="ECO:0000305" key="20"/>
<evidence type="ECO:0007744" key="21">
    <source>
        <dbReference type="PDB" id="7EDX"/>
    </source>
</evidence>
<evidence type="ECO:0007744" key="22">
    <source>
        <dbReference type="PDB" id="7EG7"/>
    </source>
</evidence>
<evidence type="ECO:0007744" key="23">
    <source>
        <dbReference type="PDB" id="7EG8"/>
    </source>
</evidence>
<evidence type="ECO:0007744" key="24">
    <source>
        <dbReference type="PDB" id="7EG9"/>
    </source>
</evidence>
<evidence type="ECO:0007744" key="25">
    <source>
        <dbReference type="PDB" id="7EGA"/>
    </source>
</evidence>
<evidence type="ECO:0007744" key="26">
    <source>
        <dbReference type="PDB" id="7EGB"/>
    </source>
</evidence>
<evidence type="ECO:0007744" key="27">
    <source>
        <dbReference type="PDB" id="7EGC"/>
    </source>
</evidence>
<evidence type="ECO:0007744" key="28">
    <source>
        <dbReference type="PDB" id="7EGD"/>
    </source>
</evidence>
<evidence type="ECO:0007744" key="29">
    <source>
        <dbReference type="PDB" id="7EGE"/>
    </source>
</evidence>
<evidence type="ECO:0007744" key="30">
    <source>
        <dbReference type="PDB" id="7EGH"/>
    </source>
</evidence>
<evidence type="ECO:0007744" key="31">
    <source>
    </source>
</evidence>
<evidence type="ECO:0007744" key="32">
    <source>
    </source>
</evidence>
<evidence type="ECO:0007744" key="33">
    <source>
    </source>
</evidence>
<evidence type="ECO:0007744" key="34">
    <source>
    </source>
</evidence>
<evidence type="ECO:0007744" key="35">
    <source>
    </source>
</evidence>
<evidence type="ECO:0007744" key="36">
    <source>
    </source>
</evidence>
<evidence type="ECO:0007744" key="37">
    <source>
    </source>
</evidence>
<evidence type="ECO:0007829" key="38">
    <source>
        <dbReference type="PDB" id="4RGW"/>
    </source>
</evidence>
<evidence type="ECO:0007829" key="39">
    <source>
        <dbReference type="PDB" id="7EGH"/>
    </source>
</evidence>
<gene>
    <name type="primary">TAF7</name>
    <name type="synonym">TAF2F</name>
    <name type="synonym">TAFII55</name>
</gene>
<comment type="function">
    <text evidence="5 15">The TFIID basal transcription factor complex plays a major role in the initiation of RNA polymerase II (Pol II)-dependent transcription (PubMed:33795473). TFIID recognizes and binds promoters with or without a TATA box via its subunit TBP, a TATA-box-binding protein, and promotes assembly of the pre-initiation complex (PIC) (PubMed:33795473). The TFIID complex consists of TBP and TBP-associated factors (TAFs), including TAF1, TAF2, TAF3, TAF4, TAF5, TAF6, TAF7, TAF8, TAF9, TAF10, TAF11, TAF12 and TAF13 (PubMed:10438527, PubMed:33795473). TAF7 forms a promoter DNA binding subcomplex of TFIID, together with TAF1 and TAF2 (PubMed:33795473). Part of a TFIID complex containing TAF10 (TFIID alpha) and a TFIID complex lacking TAF10 (TFIID beta) (PubMed:10438527).</text>
</comment>
<comment type="subunit">
    <text evidence="5 6 7 9 12 13 15 16">Component of the TFIID basal transcription factor complex, composed of TATA-box-binding protein TBP, and a number of TBP-associated factors (TAFs), including TAF1, TAF2, TAF3, TAF4, TAF5, TAF6, TAF7, TAF8, TAF9, TAF10, TAF11, TAF12 and TAF13 (PubMed:10438527, PubMed:27007846, PubMed:33795473). Part of a TFIID-containing RNA polymerase II pre-initiation complex that is composed of TBP and at least GTF2A1, GTF2A2, GTF2E1, GTF2E2, GTF2F1, GTF2H2, GTF2H3, GTF2H4, GTF2H5, GTF2B, TCEA1, ERCC2, ERCC3, TAF1, TAF2, TAF3, TAF4, TAF5, TAF6, TAF7, TAF8, TAF9, TAF10, TAF11, TAF12 and TAF13 (PubMed:27007846, PubMed:33795473). Interacts with TAF1; the interaction is direct (PubMed:25412659). Interacts with TAF1, TAF5, TAF11, TAF12, and TAF13, but not with TAF10 or TBP (PubMed:10438527, PubMed:8702684). Component of some MLL1/MLL complex, at least composed of the core components KMT2A/MLL1, ASH2L, HCFC1/HCF1, WDR5 and RBBP5, as well as the facultative components BACC1, CHD8, E2F6, HSP70, INO80C, KANSL1, LAS1L, MAX, MCRS1, MGA, MYST1/MOF, PELP1, PHF20, PRP31, RING2, RUVB1/TIP49A, RUVB2/TIP49B, SENP3, TAF1, TAF4, TAF6, TAF7, TAF9 and TEX10 (PubMed:15960975). Interacts with CIITA and TAF1 and inhibits their acetyltransferase activity, and behaving as a repressor of CIITA- and TAF1-regulated promoters (PubMed:11592977, PubMed:20937824).</text>
</comment>
<comment type="interaction">
    <interactant intactId="EBI-1560194">
        <id>Q15545</id>
    </interactant>
    <interactant intactId="EBI-9091052">
        <id>Q6P4D5-2</id>
        <label>PABIR3</label>
    </interactant>
    <organismsDiffer>false</organismsDiffer>
    <experiments>3</experiments>
</comment>
<comment type="interaction">
    <interactant intactId="EBI-1560194">
        <id>Q15545</id>
    </interactant>
    <interactant intactId="EBI-4314702">
        <id>Q03403</id>
        <label>TFF2</label>
    </interactant>
    <organismsDiffer>false</organismsDiffer>
    <experiments>3</experiments>
</comment>
<comment type="interaction">
    <interactant intactId="EBI-1560194">
        <id>Q15545</id>
    </interactant>
    <interactant intactId="EBI-25834258">
        <id>P13051-2</id>
        <label>UNG</label>
    </interactant>
    <organismsDiffer>false</organismsDiffer>
    <experiments>3</experiments>
</comment>
<comment type="interaction">
    <interactant intactId="EBI-1560194">
        <id>Q15545</id>
    </interactant>
    <interactant intactId="EBI-15563115">
        <id>Q80UV9-1</id>
        <label>Taf1</label>
    </interactant>
    <organismsDiffer>true</organismsDiffer>
    <experiments>2</experiments>
</comment>
<comment type="subcellular location">
    <subcellularLocation>
        <location evidence="2">Nucleus</location>
    </subcellularLocation>
</comment>
<comment type="tissue specificity">
    <text>Ubiquitous.</text>
</comment>
<comment type="domain">
    <text evidence="1">The [KR]-[STA]-K motif is specifically recognized by the SETD7 methyltransferase, which methylates Lys-5 in vitro.</text>
</comment>
<comment type="PTM">
    <text evidence="10 11">Phosphorylated by CIITA. Phosphorylation at Ser-264 by TAF1 in early G1 phase disrupts binding to TAF1.</text>
</comment>
<comment type="PTM">
    <text evidence="14">Ubiquitinated by TRIM26; leading to proteasomal degradation.</text>
</comment>
<comment type="miscellaneous">
    <text>Overexpression of TAF7 in HeLa cells inhibits cyclin D1 and cyclin A gene transcription and causes the cells to accumulate in early S phase. In contrast, depletion of TAF7 from TFIID complexes by siRNAs increases histone H3 acetylation at both cyclin promoters and stimulates cyclins CCND1 and CCNA gene transcription.</text>
</comment>
<comment type="similarity">
    <text evidence="20">Belongs to the TAF7 family.</text>
</comment>
<keyword id="KW-0002">3D-structure</keyword>
<keyword id="KW-0175">Coiled coil</keyword>
<keyword id="KW-0539">Nucleus</keyword>
<keyword id="KW-0597">Phosphoprotein</keyword>
<keyword id="KW-1267">Proteomics identification</keyword>
<keyword id="KW-1185">Reference proteome</keyword>
<keyword id="KW-0804">Transcription</keyword>
<keyword id="KW-0805">Transcription regulation</keyword>
<keyword id="KW-0832">Ubl conjugation</keyword>
<reference key="1">
    <citation type="journal article" date="1996" name="J. Biol. Chem.">
        <title>Multiple interactions between hTAFII55 and other TFIID subunits. Requirements for the formation of stable ternary complexes between hTAFII55 and the TATA-binding protein.</title>
        <authorList>
            <person name="Lavigne A.C."/>
            <person name="Mengus G."/>
            <person name="May M."/>
            <person name="Dubrowskaya V."/>
            <person name="Tora L."/>
            <person name="Davidson I."/>
        </authorList>
    </citation>
    <scope>NUCLEOTIDE SEQUENCE [MRNA]</scope>
    <scope>SUBUNIT</scope>
</reference>
<reference key="2">
    <citation type="journal article" date="1995" name="Science">
        <title>Cloning of an intrinsic human TFIID subunit that interacts with multiple transcriptional activators.</title>
        <authorList>
            <person name="Chiang C.-M."/>
            <person name="Roeder R.G."/>
        </authorList>
    </citation>
    <scope>NUCLEOTIDE SEQUENCE [MRNA]</scope>
    <scope>SUBUNIT</scope>
</reference>
<reference key="3">
    <citation type="journal article" date="2001" name="J. Biol. Chem.">
        <title>The intronless and TATA-less human TAFII55 gene contains a functional initiator and a downstream promoter element.</title>
        <authorList>
            <person name="Zhou T."/>
            <person name="Chiang C.-M."/>
        </authorList>
    </citation>
    <scope>NUCLEOTIDE SEQUENCE [GENOMIC DNA]</scope>
</reference>
<reference key="4">
    <citation type="journal article" date="2004" name="Nat. Genet.">
        <title>Complete sequencing and characterization of 21,243 full-length human cDNAs.</title>
        <authorList>
            <person name="Ota T."/>
            <person name="Suzuki Y."/>
            <person name="Nishikawa T."/>
            <person name="Otsuki T."/>
            <person name="Sugiyama T."/>
            <person name="Irie R."/>
            <person name="Wakamatsu A."/>
            <person name="Hayashi K."/>
            <person name="Sato H."/>
            <person name="Nagai K."/>
            <person name="Kimura K."/>
            <person name="Makita H."/>
            <person name="Sekine M."/>
            <person name="Obayashi M."/>
            <person name="Nishi T."/>
            <person name="Shibahara T."/>
            <person name="Tanaka T."/>
            <person name="Ishii S."/>
            <person name="Yamamoto J."/>
            <person name="Saito K."/>
            <person name="Kawai Y."/>
            <person name="Isono Y."/>
            <person name="Nakamura Y."/>
            <person name="Nagahari K."/>
            <person name="Murakami K."/>
            <person name="Yasuda T."/>
            <person name="Iwayanagi T."/>
            <person name="Wagatsuma M."/>
            <person name="Shiratori A."/>
            <person name="Sudo H."/>
            <person name="Hosoiri T."/>
            <person name="Kaku Y."/>
            <person name="Kodaira H."/>
            <person name="Kondo H."/>
            <person name="Sugawara M."/>
            <person name="Takahashi M."/>
            <person name="Kanda K."/>
            <person name="Yokoi T."/>
            <person name="Furuya T."/>
            <person name="Kikkawa E."/>
            <person name="Omura Y."/>
            <person name="Abe K."/>
            <person name="Kamihara K."/>
            <person name="Katsuta N."/>
            <person name="Sato K."/>
            <person name="Tanikawa M."/>
            <person name="Yamazaki M."/>
            <person name="Ninomiya K."/>
            <person name="Ishibashi T."/>
            <person name="Yamashita H."/>
            <person name="Murakawa K."/>
            <person name="Fujimori K."/>
            <person name="Tanai H."/>
            <person name="Kimata M."/>
            <person name="Watanabe M."/>
            <person name="Hiraoka S."/>
            <person name="Chiba Y."/>
            <person name="Ishida S."/>
            <person name="Ono Y."/>
            <person name="Takiguchi S."/>
            <person name="Watanabe S."/>
            <person name="Yosida M."/>
            <person name="Hotuta T."/>
            <person name="Kusano J."/>
            <person name="Kanehori K."/>
            <person name="Takahashi-Fujii A."/>
            <person name="Hara H."/>
            <person name="Tanase T.-O."/>
            <person name="Nomura Y."/>
            <person name="Togiya S."/>
            <person name="Komai F."/>
            <person name="Hara R."/>
            <person name="Takeuchi K."/>
            <person name="Arita M."/>
            <person name="Imose N."/>
            <person name="Musashino K."/>
            <person name="Yuuki H."/>
            <person name="Oshima A."/>
            <person name="Sasaki N."/>
            <person name="Aotsuka S."/>
            <person name="Yoshikawa Y."/>
            <person name="Matsunawa H."/>
            <person name="Ichihara T."/>
            <person name="Shiohata N."/>
            <person name="Sano S."/>
            <person name="Moriya S."/>
            <person name="Momiyama H."/>
            <person name="Satoh N."/>
            <person name="Takami S."/>
            <person name="Terashima Y."/>
            <person name="Suzuki O."/>
            <person name="Nakagawa S."/>
            <person name="Senoh A."/>
            <person name="Mizoguchi H."/>
            <person name="Goto Y."/>
            <person name="Shimizu F."/>
            <person name="Wakebe H."/>
            <person name="Hishigaki H."/>
            <person name="Watanabe T."/>
            <person name="Sugiyama A."/>
            <person name="Takemoto M."/>
            <person name="Kawakami B."/>
            <person name="Yamazaki M."/>
            <person name="Watanabe K."/>
            <person name="Kumagai A."/>
            <person name="Itakura S."/>
            <person name="Fukuzumi Y."/>
            <person name="Fujimori Y."/>
            <person name="Komiyama M."/>
            <person name="Tashiro H."/>
            <person name="Tanigami A."/>
            <person name="Fujiwara T."/>
            <person name="Ono T."/>
            <person name="Yamada K."/>
            <person name="Fujii Y."/>
            <person name="Ozaki K."/>
            <person name="Hirao M."/>
            <person name="Ohmori Y."/>
            <person name="Kawabata A."/>
            <person name="Hikiji T."/>
            <person name="Kobatake N."/>
            <person name="Inagaki H."/>
            <person name="Ikema Y."/>
            <person name="Okamoto S."/>
            <person name="Okitani R."/>
            <person name="Kawakami T."/>
            <person name="Noguchi S."/>
            <person name="Itoh T."/>
            <person name="Shigeta K."/>
            <person name="Senba T."/>
            <person name="Matsumura K."/>
            <person name="Nakajima Y."/>
            <person name="Mizuno T."/>
            <person name="Morinaga M."/>
            <person name="Sasaki M."/>
            <person name="Togashi T."/>
            <person name="Oyama M."/>
            <person name="Hata H."/>
            <person name="Watanabe M."/>
            <person name="Komatsu T."/>
            <person name="Mizushima-Sugano J."/>
            <person name="Satoh T."/>
            <person name="Shirai Y."/>
            <person name="Takahashi Y."/>
            <person name="Nakagawa K."/>
            <person name="Okumura K."/>
            <person name="Nagase T."/>
            <person name="Nomura N."/>
            <person name="Kikuchi H."/>
            <person name="Masuho Y."/>
            <person name="Yamashita R."/>
            <person name="Nakai K."/>
            <person name="Yada T."/>
            <person name="Nakamura Y."/>
            <person name="Ohara O."/>
            <person name="Isogai T."/>
            <person name="Sugano S."/>
        </authorList>
    </citation>
    <scope>NUCLEOTIDE SEQUENCE [LARGE SCALE MRNA]</scope>
    <source>
        <tissue>Brain</tissue>
    </source>
</reference>
<reference key="5">
    <citation type="submission" date="2005-09" db="EMBL/GenBank/DDBJ databases">
        <authorList>
            <person name="Mural R.J."/>
            <person name="Istrail S."/>
            <person name="Sutton G.G."/>
            <person name="Florea L."/>
            <person name="Halpern A.L."/>
            <person name="Mobarry C.M."/>
            <person name="Lippert R."/>
            <person name="Walenz B."/>
            <person name="Shatkay H."/>
            <person name="Dew I."/>
            <person name="Miller J.R."/>
            <person name="Flanigan M.J."/>
            <person name="Edwards N.J."/>
            <person name="Bolanos R."/>
            <person name="Fasulo D."/>
            <person name="Halldorsson B.V."/>
            <person name="Hannenhalli S."/>
            <person name="Turner R."/>
            <person name="Yooseph S."/>
            <person name="Lu F."/>
            <person name="Nusskern D.R."/>
            <person name="Shue B.C."/>
            <person name="Zheng X.H."/>
            <person name="Zhong F."/>
            <person name="Delcher A.L."/>
            <person name="Huson D.H."/>
            <person name="Kravitz S.A."/>
            <person name="Mouchard L."/>
            <person name="Reinert K."/>
            <person name="Remington K.A."/>
            <person name="Clark A.G."/>
            <person name="Waterman M.S."/>
            <person name="Eichler E.E."/>
            <person name="Adams M.D."/>
            <person name="Hunkapiller M.W."/>
            <person name="Myers E.W."/>
            <person name="Venter J.C."/>
        </authorList>
    </citation>
    <scope>NUCLEOTIDE SEQUENCE [LARGE SCALE GENOMIC DNA]</scope>
</reference>
<reference key="6">
    <citation type="journal article" date="2004" name="Genome Res.">
        <title>The status, quality, and expansion of the NIH full-length cDNA project: the Mammalian Gene Collection (MGC).</title>
        <authorList>
            <consortium name="The MGC Project Team"/>
        </authorList>
    </citation>
    <scope>NUCLEOTIDE SEQUENCE [LARGE SCALE MRNA]</scope>
    <source>
        <tissue>Skin</tissue>
    </source>
</reference>
<reference key="7">
    <citation type="journal article" date="1999" name="J. Biol. Chem.">
        <title>Isolation of mouse TFIID and functional characterization of TBP and TFIID in mediating estrogen receptor and chromatin transcription.</title>
        <authorList>
            <person name="Wu S.Y."/>
            <person name="Thomas M.C."/>
            <person name="Hou S.Y."/>
            <person name="Likhite V."/>
            <person name="Chiang C.M."/>
        </authorList>
    </citation>
    <scope>FUNCTION</scope>
    <scope>SUBUNIT</scope>
</reference>
<reference key="8">
    <citation type="journal article" date="2001" name="Proc. Natl. Acad. Sci. U.S.A.">
        <title>TAFII55 binding to TAFII250 inhibits its acetyltransferase activity.</title>
        <authorList>
            <person name="Gegonne A."/>
            <person name="Weissman J.D."/>
            <person name="Singer D.S."/>
        </authorList>
    </citation>
    <scope>INTERACTION WITH TAF1</scope>
</reference>
<reference key="9">
    <citation type="journal article" date="2005" name="Cell">
        <title>Physical association and coordinate function of the H3 K4 methyltransferase MLL1 and the H4 K16 acetyltransferase MOF.</title>
        <authorList>
            <person name="Dou Y."/>
            <person name="Milne T.A."/>
            <person name="Tackett A.J."/>
            <person name="Smith E.R."/>
            <person name="Fukuda A."/>
            <person name="Wysocka J."/>
            <person name="Allis C.D."/>
            <person name="Chait B.T."/>
            <person name="Hess J.L."/>
            <person name="Roeder R.G."/>
        </authorList>
    </citation>
    <scope>IDENTIFICATION IN THE MLL1/MLL COMPLEX</scope>
</reference>
<reference key="10">
    <citation type="journal article" date="2010" name="J. Biol. Chem.">
        <title>Novel functions for TAF7, a regulator of TAF1-independent transcription.</title>
        <authorList>
            <person name="Devaiah B.N."/>
            <person name="Lu H."/>
            <person name="Gegonne A."/>
            <person name="Sercan Z."/>
            <person name="Zhang H."/>
            <person name="Clifford R.J."/>
            <person name="Lee M.P."/>
            <person name="Singer D.S."/>
        </authorList>
    </citation>
    <scope>INTERACTION WITH CIITA</scope>
</reference>
<reference key="11">
    <citation type="journal article" date="2006" name="Cell">
        <title>Global, in vivo, and site-specific phosphorylation dynamics in signaling networks.</title>
        <authorList>
            <person name="Olsen J.V."/>
            <person name="Blagoev B."/>
            <person name="Gnad F."/>
            <person name="Macek B."/>
            <person name="Kumar C."/>
            <person name="Mortensen P."/>
            <person name="Mann M."/>
        </authorList>
    </citation>
    <scope>PHOSPHORYLATION [LARGE SCALE ANALYSIS] AT SER-213</scope>
    <scope>IDENTIFICATION BY MASS SPECTROMETRY [LARGE SCALE ANALYSIS]</scope>
    <source>
        <tissue>Cervix carcinoma</tissue>
    </source>
</reference>
<reference key="12">
    <citation type="journal article" date="2006" name="Nat. Struct. Mol. Biol.">
        <title>Structural basis for the methylation site specificity of SET7/9.</title>
        <authorList>
            <person name="Couture J.-F."/>
            <person name="Collazo E."/>
            <person name="Hauk G."/>
            <person name="Trievel R.C."/>
        </authorList>
    </citation>
    <scope>MOTIF</scope>
    <scope>MUTAGENESIS OF LYS-5</scope>
</reference>
<reference key="13">
    <citation type="journal article" date="2008" name="Mol. Cell">
        <title>Kinase-selective enrichment enables quantitative phosphoproteomics of the kinome across the cell cycle.</title>
        <authorList>
            <person name="Daub H."/>
            <person name="Olsen J.V."/>
            <person name="Bairlein M."/>
            <person name="Gnad F."/>
            <person name="Oppermann F.S."/>
            <person name="Korner R."/>
            <person name="Greff Z."/>
            <person name="Keri G."/>
            <person name="Stemmann O."/>
            <person name="Mann M."/>
        </authorList>
    </citation>
    <scope>IDENTIFICATION BY MASS SPECTROMETRY [LARGE SCALE ANALYSIS]</scope>
    <source>
        <tissue>Cervix carcinoma</tissue>
    </source>
</reference>
<reference key="14">
    <citation type="journal article" date="2008" name="Proc. Natl. Acad. Sci. U.S.A.">
        <title>A quantitative atlas of mitotic phosphorylation.</title>
        <authorList>
            <person name="Dephoure N."/>
            <person name="Zhou C."/>
            <person name="Villen J."/>
            <person name="Beausoleil S.A."/>
            <person name="Bakalarski C.E."/>
            <person name="Elledge S.J."/>
            <person name="Gygi S.P."/>
        </authorList>
    </citation>
    <scope>PHOSPHORYLATION [LARGE SCALE ANALYSIS] AT SER-171 AND SER-264</scope>
    <scope>IDENTIFICATION BY MASS SPECTROMETRY [LARGE SCALE ANALYSIS]</scope>
    <source>
        <tissue>Cervix carcinoma</tissue>
    </source>
</reference>
<reference key="15">
    <citation type="journal article" date="2009" name="Sci. Signal.">
        <title>Quantitative phosphoproteomic analysis of T cell receptor signaling reveals system-wide modulation of protein-protein interactions.</title>
        <authorList>
            <person name="Mayya V."/>
            <person name="Lundgren D.H."/>
            <person name="Hwang S.-I."/>
            <person name="Rezaul K."/>
            <person name="Wu L."/>
            <person name="Eng J.K."/>
            <person name="Rodionov V."/>
            <person name="Han D.K."/>
        </authorList>
    </citation>
    <scope>PHOSPHORYLATION [LARGE SCALE ANALYSIS] AT SER-264</scope>
    <scope>IDENTIFICATION BY MASS SPECTROMETRY [LARGE SCALE ANALYSIS]</scope>
    <source>
        <tissue>Leukemic T-cell</tissue>
    </source>
</reference>
<reference key="16">
    <citation type="journal article" date="2010" name="Sci. Signal.">
        <title>Quantitative phosphoproteomics reveals widespread full phosphorylation site occupancy during mitosis.</title>
        <authorList>
            <person name="Olsen J.V."/>
            <person name="Vermeulen M."/>
            <person name="Santamaria A."/>
            <person name="Kumar C."/>
            <person name="Miller M.L."/>
            <person name="Jensen L.J."/>
            <person name="Gnad F."/>
            <person name="Cox J."/>
            <person name="Jensen T.S."/>
            <person name="Nigg E.A."/>
            <person name="Brunak S."/>
            <person name="Mann M."/>
        </authorList>
    </citation>
    <scope>PHOSPHORYLATION [LARGE SCALE ANALYSIS] AT SER-264</scope>
    <scope>IDENTIFICATION BY MASS SPECTROMETRY [LARGE SCALE ANALYSIS]</scope>
    <source>
        <tissue>Cervix carcinoma</tissue>
    </source>
</reference>
<reference key="17">
    <citation type="journal article" date="2011" name="Sci. Signal.">
        <title>System-wide temporal characterization of the proteome and phosphoproteome of human embryonic stem cell differentiation.</title>
        <authorList>
            <person name="Rigbolt K.T."/>
            <person name="Prokhorova T.A."/>
            <person name="Akimov V."/>
            <person name="Henningsen J."/>
            <person name="Johansen P.T."/>
            <person name="Kratchmarova I."/>
            <person name="Kassem M."/>
            <person name="Mann M."/>
            <person name="Olsen J.V."/>
            <person name="Blagoev B."/>
        </authorList>
    </citation>
    <scope>PHOSPHORYLATION [LARGE SCALE ANALYSIS] AT SER-264</scope>
    <scope>IDENTIFICATION BY MASS SPECTROMETRY [LARGE SCALE ANALYSIS]</scope>
</reference>
<reference key="18">
    <citation type="journal article" date="2012" name="Mol. Cell. Biol.">
        <title>Phosphorylation-dependent regulation of cyclin D1 and cyclin A gene transcription by TFIID subunits TAF1 and TAF7.</title>
        <authorList>
            <person name="Kloet S.L."/>
            <person name="Whiting J.L."/>
            <person name="Gafken P."/>
            <person name="Ranish J."/>
            <person name="Wang E.H."/>
        </authorList>
    </citation>
    <scope>INTERACTION WITH TAF1</scope>
    <scope>MISCELLANEOUS</scope>
    <scope>PHOSPHORYLATION AT SER-264</scope>
    <scope>MUTAGENESIS OF SER-264</scope>
</reference>
<reference key="19">
    <citation type="journal article" date="2013" name="Biochim. Biophys. Acta">
        <title>Transcriptional coactivator CIITA, a functional homolog of TAF1, has kinase activity.</title>
        <authorList>
            <person name="Soe K.C."/>
            <person name="Devaiah B.N."/>
            <person name="Singer D.S."/>
        </authorList>
    </citation>
    <scope>PHOSPHORYLATION BY CIITA</scope>
</reference>
<reference key="20">
    <citation type="journal article" date="2013" name="J. Proteome Res.">
        <title>Toward a comprehensive characterization of a human cancer cell phosphoproteome.</title>
        <authorList>
            <person name="Zhou H."/>
            <person name="Di Palma S."/>
            <person name="Preisinger C."/>
            <person name="Peng M."/>
            <person name="Polat A.N."/>
            <person name="Heck A.J."/>
            <person name="Mohammed S."/>
        </authorList>
    </citation>
    <scope>PHOSPHORYLATION [LARGE SCALE ANALYSIS] AT SER-171; SER-200; SER-201; SER-213 AND SER-264</scope>
    <scope>IDENTIFICATION BY MASS SPECTROMETRY [LARGE SCALE ANALYSIS]</scope>
    <source>
        <tissue>Cervix carcinoma</tissue>
        <tissue>Erythroleukemia</tissue>
    </source>
</reference>
<reference key="21">
    <citation type="journal article" date="2014" name="J. Proteomics">
        <title>An enzyme assisted RP-RPLC approach for in-depth analysis of human liver phosphoproteome.</title>
        <authorList>
            <person name="Bian Y."/>
            <person name="Song C."/>
            <person name="Cheng K."/>
            <person name="Dong M."/>
            <person name="Wang F."/>
            <person name="Huang J."/>
            <person name="Sun D."/>
            <person name="Wang L."/>
            <person name="Ye M."/>
            <person name="Zou H."/>
        </authorList>
    </citation>
    <scope>PHOSPHORYLATION [LARGE SCALE ANALYSIS] AT SER-171 AND SER-264</scope>
    <scope>IDENTIFICATION BY MASS SPECTROMETRY [LARGE SCALE ANALYSIS]</scope>
    <source>
        <tissue>Liver</tissue>
    </source>
</reference>
<reference key="22">
    <citation type="journal article" date="2018" name="Mol. Cell. Biol.">
        <title>Transforming Growth Factor beta-Induced Proliferative Arrest Mediated by TRIM26-Dependent TAF7 Degradation and Its Antagonism by MYC.</title>
        <authorList>
            <person name="Nakagawa T."/>
            <person name="Hosogane M."/>
            <person name="Nakagawa M."/>
            <person name="Morohoshi A."/>
            <person name="Funayama R."/>
            <person name="Nakayama K."/>
        </authorList>
    </citation>
    <scope>UBIQUITINATION BY TRIM26</scope>
</reference>
<reference key="23">
    <citation type="journal article" date="2014" name="Cell Res.">
        <title>Crystal structure of a TAF1-TAF7 complex in human transcription factor IID reveals a promoter binding module.</title>
        <authorList>
            <person name="Wang H."/>
            <person name="Curran E.C."/>
            <person name="Hinds T.R."/>
            <person name="Wang E.H."/>
            <person name="Zheng N."/>
        </authorList>
    </citation>
    <scope>X-RAY CRYSTALLOGRAPHY (2.30 ANGSTROMS) IN COMPLEX WITH TAF1</scope>
</reference>
<reference key="24">
    <citation type="journal article" date="2016" name="Nature">
        <title>Structure of promoter-bound TFIID and model of human pre-initiation complex assembly.</title>
        <authorList>
            <person name="Louder R.K."/>
            <person name="He Y."/>
            <person name="Lopez-Blanco J.R."/>
            <person name="Fang J."/>
            <person name="Chacon P."/>
            <person name="Nogales E."/>
        </authorList>
    </citation>
    <scope>STRUCTURE BY ELECTRON MICROSCOPY (8.50 ANGSTROMS)</scope>
    <scope>SUBUNIT</scope>
</reference>
<reference evidence="21 22 23 24 25 26 27 28 29 30" key="25">
    <citation type="journal article" date="2021" name="Science">
        <title>Structural insights into preinitiation complex assembly on core promoters.</title>
        <authorList>
            <person name="Chen X."/>
            <person name="Qi Y."/>
            <person name="Wu Z."/>
            <person name="Wang X."/>
            <person name="Li J."/>
            <person name="Zhao D."/>
            <person name="Hou H."/>
            <person name="Li Y."/>
            <person name="Yu Z."/>
            <person name="Liu W."/>
            <person name="Wang M."/>
            <person name="Ren Y."/>
            <person name="Li Z."/>
            <person name="Yang H."/>
            <person name="Xu Y."/>
        </authorList>
    </citation>
    <scope>STRUCTURE BY ELECTRON MICROSCOPY (3.04 ANGSTROMS)</scope>
    <scope>FUNCTION</scope>
    <scope>IDENTIFICATION IN THE TFIID COMPLEX</scope>
    <scope>SUBUNIT</scope>
</reference>
<sequence length="349" mass="40259">MSKSKDDAPHELESQFILRLPPEYASTVRRAVQSGHVNLKDRLTIELHPDGRHGIVRVDRVPLASKLVDLPCVMESLKTIDKKTFYKTADICQMLVSTVDGDLYPPVEEPVASTDPKASKKKDKDKEKKFIWNHGITLPLKNVRKRRFRKTAKKKYIESPDVEKEVKRLLSTDAEAVSTRWEIIAEDETKEAENQGLDISSPGMSGHRQGHDSLEHDELREIFNDLSSSSEDEDETQHQDEEDINIIDTEEDLERQLQDKLNESDEQHQENEGTNQLVMGIQKQIDNMKGKLQETQDRAKRQEDLIMKVENLALKNRFQAVLDELKQKEDREKEQLSSLQEELESLLEK</sequence>
<accession>Q15545</accession>
<accession>B2RBV9</accession>
<accession>Q13036</accession>
<name>TAF7_HUMAN</name>